<name>1A12_ORYSJ</name>
<keyword id="KW-0266">Ethylene biosynthesis</keyword>
<keyword id="KW-0456">Lyase</keyword>
<keyword id="KW-0611">Plant defense</keyword>
<keyword id="KW-0663">Pyridoxal phosphate</keyword>
<keyword id="KW-1185">Reference proteome</keyword>
<keyword id="KW-0949">S-adenosyl-L-methionine</keyword>
<gene>
    <name evidence="6" type="primary">ACS2</name>
    <name evidence="7" type="synonym">ACC2</name>
    <name evidence="9" type="ordered locus">Os04g0578000</name>
    <name evidence="7" type="ordered locus">LOC_Os04g48850</name>
    <name evidence="10" type="ORF">OSJNBa0011J08.4</name>
</gene>
<organism>
    <name type="scientific">Oryza sativa subsp. japonica</name>
    <name type="common">Rice</name>
    <dbReference type="NCBI Taxonomy" id="39947"/>
    <lineage>
        <taxon>Eukaryota</taxon>
        <taxon>Viridiplantae</taxon>
        <taxon>Streptophyta</taxon>
        <taxon>Embryophyta</taxon>
        <taxon>Tracheophyta</taxon>
        <taxon>Spermatophyta</taxon>
        <taxon>Magnoliopsida</taxon>
        <taxon>Liliopsida</taxon>
        <taxon>Poales</taxon>
        <taxon>Poaceae</taxon>
        <taxon>BOP clade</taxon>
        <taxon>Oryzoideae</taxon>
        <taxon>Oryzeae</taxon>
        <taxon>Oryzinae</taxon>
        <taxon>Oryza</taxon>
        <taxon>Oryza sativa</taxon>
    </lineage>
</organism>
<dbReference type="EC" id="4.4.1.14" evidence="1"/>
<dbReference type="EMBL" id="AL606624">
    <property type="protein sequence ID" value="CAE03249.1"/>
    <property type="molecule type" value="Genomic_DNA"/>
</dbReference>
<dbReference type="EMBL" id="AP008210">
    <property type="protein sequence ID" value="BAF15551.1"/>
    <property type="molecule type" value="Genomic_DNA"/>
</dbReference>
<dbReference type="EMBL" id="AP014960">
    <property type="protein sequence ID" value="BAS90624.1"/>
    <property type="molecule type" value="Genomic_DNA"/>
</dbReference>
<dbReference type="EMBL" id="AK064250">
    <property type="protein sequence ID" value="BAG89048.1"/>
    <property type="molecule type" value="mRNA"/>
</dbReference>
<dbReference type="RefSeq" id="XP_015634087.1">
    <property type="nucleotide sequence ID" value="XM_015778601.1"/>
</dbReference>
<dbReference type="SMR" id="Q7XQ85"/>
<dbReference type="FunCoup" id="Q7XQ85">
    <property type="interactions" value="449"/>
</dbReference>
<dbReference type="STRING" id="39947.Q7XQ85"/>
<dbReference type="PaxDb" id="39947-Q7XQ85"/>
<dbReference type="EnsemblPlants" id="Os04t0578000-01">
    <property type="protein sequence ID" value="Os04t0578000-01"/>
    <property type="gene ID" value="Os04g0578000"/>
</dbReference>
<dbReference type="Gramene" id="Os04t0578000-01">
    <property type="protein sequence ID" value="Os04t0578000-01"/>
    <property type="gene ID" value="Os04g0578000"/>
</dbReference>
<dbReference type="KEGG" id="dosa:Os04g0578000"/>
<dbReference type="eggNOG" id="KOG0256">
    <property type="taxonomic scope" value="Eukaryota"/>
</dbReference>
<dbReference type="HOGENOM" id="CLU_017584_1_0_1"/>
<dbReference type="InParanoid" id="Q7XQ85"/>
<dbReference type="OMA" id="KIPWRYA"/>
<dbReference type="OrthoDB" id="691673at2759"/>
<dbReference type="PlantReactome" id="R-OSA-1119334">
    <property type="pathway name" value="Ethylene biosynthesis from methionine"/>
</dbReference>
<dbReference type="PlantReactome" id="R-OSA-1119624">
    <property type="pathway name" value="Methionine salvage pathway"/>
</dbReference>
<dbReference type="UniPathway" id="UPA00384">
    <property type="reaction ID" value="UER00562"/>
</dbReference>
<dbReference type="Proteomes" id="UP000000763">
    <property type="component" value="Chromosome 4"/>
</dbReference>
<dbReference type="Proteomes" id="UP000059680">
    <property type="component" value="Chromosome 4"/>
</dbReference>
<dbReference type="GO" id="GO:0016847">
    <property type="term" value="F:1-aminocyclopropane-1-carboxylate synthase activity"/>
    <property type="evidence" value="ECO:0007669"/>
    <property type="project" value="EnsemblPlants"/>
</dbReference>
<dbReference type="GO" id="GO:0042802">
    <property type="term" value="F:identical protein binding"/>
    <property type="evidence" value="ECO:0007669"/>
    <property type="project" value="EnsemblPlants"/>
</dbReference>
<dbReference type="GO" id="GO:0030170">
    <property type="term" value="F:pyridoxal phosphate binding"/>
    <property type="evidence" value="ECO:0007669"/>
    <property type="project" value="InterPro"/>
</dbReference>
<dbReference type="GO" id="GO:0008483">
    <property type="term" value="F:transaminase activity"/>
    <property type="evidence" value="ECO:0000318"/>
    <property type="project" value="GO_Central"/>
</dbReference>
<dbReference type="GO" id="GO:0006520">
    <property type="term" value="P:amino acid metabolic process"/>
    <property type="evidence" value="ECO:0000318"/>
    <property type="project" value="GO_Central"/>
</dbReference>
<dbReference type="GO" id="GO:0051301">
    <property type="term" value="P:cell division"/>
    <property type="evidence" value="ECO:0007669"/>
    <property type="project" value="EnsemblPlants"/>
</dbReference>
<dbReference type="GO" id="GO:0006952">
    <property type="term" value="P:defense response"/>
    <property type="evidence" value="ECO:0000315"/>
    <property type="project" value="UniProtKB"/>
</dbReference>
<dbReference type="GO" id="GO:0009693">
    <property type="term" value="P:ethylene biosynthetic process"/>
    <property type="evidence" value="ECO:0000315"/>
    <property type="project" value="UniProtKB"/>
</dbReference>
<dbReference type="GO" id="GO:0010087">
    <property type="term" value="P:phloem or xylem histogenesis"/>
    <property type="evidence" value="ECO:0007669"/>
    <property type="project" value="EnsemblPlants"/>
</dbReference>
<dbReference type="GO" id="GO:0009733">
    <property type="term" value="P:response to auxin"/>
    <property type="evidence" value="ECO:0007669"/>
    <property type="project" value="EnsemblPlants"/>
</dbReference>
<dbReference type="GO" id="GO:0009753">
    <property type="term" value="P:response to jasmonic acid"/>
    <property type="evidence" value="ECO:0007669"/>
    <property type="project" value="EnsemblPlants"/>
</dbReference>
<dbReference type="GO" id="GO:0009612">
    <property type="term" value="P:response to mechanical stimulus"/>
    <property type="evidence" value="ECO:0007669"/>
    <property type="project" value="EnsemblPlants"/>
</dbReference>
<dbReference type="GO" id="GO:0006979">
    <property type="term" value="P:response to oxidative stress"/>
    <property type="evidence" value="ECO:0007669"/>
    <property type="project" value="EnsemblPlants"/>
</dbReference>
<dbReference type="GO" id="GO:0009611">
    <property type="term" value="P:response to wounding"/>
    <property type="evidence" value="ECO:0007669"/>
    <property type="project" value="EnsemblPlants"/>
</dbReference>
<dbReference type="CDD" id="cd00609">
    <property type="entry name" value="AAT_like"/>
    <property type="match status" value="1"/>
</dbReference>
<dbReference type="Gene3D" id="3.90.1150.10">
    <property type="entry name" value="Aspartate Aminotransferase, domain 1"/>
    <property type="match status" value="1"/>
</dbReference>
<dbReference type="Gene3D" id="3.40.640.10">
    <property type="entry name" value="Type I PLP-dependent aspartate aminotransferase-like (Major domain)"/>
    <property type="match status" value="1"/>
</dbReference>
<dbReference type="InterPro" id="IPR004839">
    <property type="entry name" value="Aminotransferase_I/II_large"/>
</dbReference>
<dbReference type="InterPro" id="IPR050478">
    <property type="entry name" value="Ethylene_sulfur-biosynth"/>
</dbReference>
<dbReference type="InterPro" id="IPR004838">
    <property type="entry name" value="NHTrfase_class1_PyrdxlP-BS"/>
</dbReference>
<dbReference type="InterPro" id="IPR015424">
    <property type="entry name" value="PyrdxlP-dep_Trfase"/>
</dbReference>
<dbReference type="InterPro" id="IPR015421">
    <property type="entry name" value="PyrdxlP-dep_Trfase_major"/>
</dbReference>
<dbReference type="InterPro" id="IPR015422">
    <property type="entry name" value="PyrdxlP-dep_Trfase_small"/>
</dbReference>
<dbReference type="PANTHER" id="PTHR43795:SF6">
    <property type="entry name" value="1-AMINOCYCLOPROPANE-1-CARBOXYLATE SYNTHASE 6"/>
    <property type="match status" value="1"/>
</dbReference>
<dbReference type="PANTHER" id="PTHR43795">
    <property type="entry name" value="BIFUNCTIONAL ASPARTATE AMINOTRANSFERASE AND GLUTAMATE/ASPARTATE-PREPHENATE AMINOTRANSFERASE-RELATED"/>
    <property type="match status" value="1"/>
</dbReference>
<dbReference type="Pfam" id="PF00155">
    <property type="entry name" value="Aminotran_1_2"/>
    <property type="match status" value="1"/>
</dbReference>
<dbReference type="PRINTS" id="PR00753">
    <property type="entry name" value="ACCSYNTHASE"/>
</dbReference>
<dbReference type="SUPFAM" id="SSF53383">
    <property type="entry name" value="PLP-dependent transferases"/>
    <property type="match status" value="1"/>
</dbReference>
<dbReference type="PROSITE" id="PS00105">
    <property type="entry name" value="AA_TRANSFER_CLASS_1"/>
    <property type="match status" value="1"/>
</dbReference>
<accession>Q7XQ85</accession>
<accession>Q0JAT6</accession>
<sequence length="483" mass="54340">MAYQGIDLLSTKAAGDDHGENSSYFDGWKAYDTNPFDLRHNRGGVIQMGLAENQLSLDLIEEWSKNHPEASICTPEGVSQFKRIANFQDYHGLPEFRKAMAQFMGQVRGGKATFDPDRVVMSGGATGAQETLAFCLANPGEAFLVPTPYYPAFDRDCCWRSGIKLLPIECHSFNDFRLTKEALVSAYDGARRQGISVKGILITNPSNPLGTITDRDTLAMLATFATEHRVHLVCDEIYAGSVFATPEYVSIAEVIERDVPWCNRDLIHVVYSLSKDFGLPGFRVGIIYSYNDAVVAAARRMSSFGLVSSQTQYFLARMLSDEEFIGRFLQESKCRLVARHERFTSGLREVGIGCLRGNAGLFSWMDLRRMLREKTAEAELELWRVIVHQVKLNVSPGTSFHCREPGWFRVCHANMDDETMEVALGRIHDFVRQHQQRRVKAERWAANRQLRLSLPHHHHLSPAHLSSPLALLSPQSPMVRATS</sequence>
<proteinExistence type="evidence at transcript level"/>
<reference key="1">
    <citation type="journal article" date="2002" name="Nature">
        <title>Sequence and analysis of rice chromosome 4.</title>
        <authorList>
            <person name="Feng Q."/>
            <person name="Zhang Y."/>
            <person name="Hao P."/>
            <person name="Wang S."/>
            <person name="Fu G."/>
            <person name="Huang Y."/>
            <person name="Li Y."/>
            <person name="Zhu J."/>
            <person name="Liu Y."/>
            <person name="Hu X."/>
            <person name="Jia P."/>
            <person name="Zhang Y."/>
            <person name="Zhao Q."/>
            <person name="Ying K."/>
            <person name="Yu S."/>
            <person name="Tang Y."/>
            <person name="Weng Q."/>
            <person name="Zhang L."/>
            <person name="Lu Y."/>
            <person name="Mu J."/>
            <person name="Lu Y."/>
            <person name="Zhang L.S."/>
            <person name="Yu Z."/>
            <person name="Fan D."/>
            <person name="Liu X."/>
            <person name="Lu T."/>
            <person name="Li C."/>
            <person name="Wu Y."/>
            <person name="Sun T."/>
            <person name="Lei H."/>
            <person name="Li T."/>
            <person name="Hu H."/>
            <person name="Guan J."/>
            <person name="Wu M."/>
            <person name="Zhang R."/>
            <person name="Zhou B."/>
            <person name="Chen Z."/>
            <person name="Chen L."/>
            <person name="Jin Z."/>
            <person name="Wang R."/>
            <person name="Yin H."/>
            <person name="Cai Z."/>
            <person name="Ren S."/>
            <person name="Lv G."/>
            <person name="Gu W."/>
            <person name="Zhu G."/>
            <person name="Tu Y."/>
            <person name="Jia J."/>
            <person name="Zhang Y."/>
            <person name="Chen J."/>
            <person name="Kang H."/>
            <person name="Chen X."/>
            <person name="Shao C."/>
            <person name="Sun Y."/>
            <person name="Hu Q."/>
            <person name="Zhang X."/>
            <person name="Zhang W."/>
            <person name="Wang L."/>
            <person name="Ding C."/>
            <person name="Sheng H."/>
            <person name="Gu J."/>
            <person name="Chen S."/>
            <person name="Ni L."/>
            <person name="Zhu F."/>
            <person name="Chen W."/>
            <person name="Lan L."/>
            <person name="Lai Y."/>
            <person name="Cheng Z."/>
            <person name="Gu M."/>
            <person name="Jiang J."/>
            <person name="Li J."/>
            <person name="Hong G."/>
            <person name="Xue Y."/>
            <person name="Han B."/>
        </authorList>
    </citation>
    <scope>NUCLEOTIDE SEQUENCE [LARGE SCALE GENOMIC DNA]</scope>
    <source>
        <strain>cv. Nipponbare</strain>
    </source>
</reference>
<reference key="2">
    <citation type="journal article" date="2005" name="Nature">
        <title>The map-based sequence of the rice genome.</title>
        <authorList>
            <consortium name="International rice genome sequencing project (IRGSP)"/>
        </authorList>
    </citation>
    <scope>NUCLEOTIDE SEQUENCE [LARGE SCALE GENOMIC DNA]</scope>
    <source>
        <strain>cv. Nipponbare</strain>
    </source>
</reference>
<reference key="3">
    <citation type="journal article" date="2008" name="Nucleic Acids Res.">
        <title>The rice annotation project database (RAP-DB): 2008 update.</title>
        <authorList>
            <consortium name="The rice annotation project (RAP)"/>
        </authorList>
    </citation>
    <scope>GENOME REANNOTATION</scope>
    <source>
        <strain>cv. Nipponbare</strain>
    </source>
</reference>
<reference key="4">
    <citation type="journal article" date="2013" name="Rice">
        <title>Improvement of the Oryza sativa Nipponbare reference genome using next generation sequence and optical map data.</title>
        <authorList>
            <person name="Kawahara Y."/>
            <person name="de la Bastide M."/>
            <person name="Hamilton J.P."/>
            <person name="Kanamori H."/>
            <person name="McCombie W.R."/>
            <person name="Ouyang S."/>
            <person name="Schwartz D.C."/>
            <person name="Tanaka T."/>
            <person name="Wu J."/>
            <person name="Zhou S."/>
            <person name="Childs K.L."/>
            <person name="Davidson R.M."/>
            <person name="Lin H."/>
            <person name="Quesada-Ocampo L."/>
            <person name="Vaillancourt B."/>
            <person name="Sakai H."/>
            <person name="Lee S.S."/>
            <person name="Kim J."/>
            <person name="Numa H."/>
            <person name="Itoh T."/>
            <person name="Buell C.R."/>
            <person name="Matsumoto T."/>
        </authorList>
    </citation>
    <scope>GENOME REANNOTATION</scope>
    <source>
        <strain>cv. Nipponbare</strain>
    </source>
</reference>
<reference key="5">
    <citation type="journal article" date="2003" name="Science">
        <title>Collection, mapping, and annotation of over 28,000 cDNA clones from japonica rice.</title>
        <authorList>
            <consortium name="The rice full-length cDNA consortium"/>
        </authorList>
    </citation>
    <scope>NUCLEOTIDE SEQUENCE [LARGE SCALE MRNA]</scope>
    <source>
        <strain>cv. Nipponbare</strain>
    </source>
</reference>
<reference key="6">
    <citation type="journal article" date="1997" name="Plant Mol. Biol.">
        <title>Expression characteristics of OS-ACS1 and OS-ACS2, two members of the 1-aminocyclopropane-1-carboxylate synthase gene family in rice (Oryza sativa L. cv. Habiganj Aman II) during partial submergence.</title>
        <authorList>
            <person name="Zarembinski T.I."/>
            <person name="Theologis A."/>
        </authorList>
    </citation>
    <scope>INDUCTION</scope>
</reference>
<reference key="7">
    <citation type="journal article" date="2006" name="Plant Physiol.">
        <title>Contribution of ethylene biosynthesis for resistance to blast fungus infection in young rice plants.</title>
        <authorList>
            <person name="Iwai T."/>
            <person name="Miyasaka A."/>
            <person name="Seo S."/>
            <person name="Ohashi Y."/>
        </authorList>
    </citation>
    <scope>FUNCTION</scope>
    <scope>INDUCTION BY INFECTION WITH MAGNAPORTHE ORYZAE</scope>
</reference>
<reference key="8">
    <citation type="journal article" date="2013" name="Plant Biotechnol. J.">
        <title>Transgenic rice with inducible ethylene production exhibits broad-spectrum disease resistance to the fungal pathogens Magnaporthe oryzae and Rhizoctonia solani.</title>
        <authorList>
            <person name="Helliwell E.E."/>
            <person name="Wang Q."/>
            <person name="Yang Y."/>
        </authorList>
    </citation>
    <scope>FUNCTION</scope>
</reference>
<reference key="9">
    <citation type="journal article" date="2019" name="J. Exp. Bot.">
        <title>Editing of the OsACS locus alters phosphate deficiency-induced adaptive responses in rice seedlings.</title>
        <authorList>
            <person name="Lee H.Y."/>
            <person name="Chen Z."/>
            <person name="Zhang C."/>
            <person name="Yoon G.M."/>
        </authorList>
    </citation>
    <scope>FUNCTION</scope>
    <scope>INDUCTION</scope>
</reference>
<comment type="function">
    <text evidence="2 3 4 8">Catalyzes the formation of 1-aminocyclopropane-1-carboxylate, a direct precursor of ethylene in higher plants (Probable). Involved in defense response by producing ethylene after pathogen infection (PubMed:17012402, PubMed:23031077). Involved in several phosphate deficiency-induced adaptive responses, such as lateral root elongation (PubMed:30810167).</text>
</comment>
<comment type="catalytic activity">
    <reaction evidence="1">
        <text>S-adenosyl-L-methionine = 1-aminocyclopropane-1-carboxylate + S-methyl-5'-thioadenosine + H(+)</text>
        <dbReference type="Rhea" id="RHEA:21744"/>
        <dbReference type="ChEBI" id="CHEBI:15378"/>
        <dbReference type="ChEBI" id="CHEBI:17509"/>
        <dbReference type="ChEBI" id="CHEBI:58360"/>
        <dbReference type="ChEBI" id="CHEBI:59789"/>
        <dbReference type="EC" id="4.4.1.14"/>
    </reaction>
</comment>
<comment type="cofactor">
    <cofactor evidence="1">
        <name>pyridoxal 5'-phosphate</name>
        <dbReference type="ChEBI" id="CHEBI:597326"/>
    </cofactor>
</comment>
<comment type="pathway">
    <text evidence="7">Alkene biosynthesis; ethylene biosynthesis via S-adenosyl-L-methionine; ethylene from S-adenosyl-L-methionine: step 1/2.</text>
</comment>
<comment type="induction">
    <text evidence="2 4 5">Down-regulated by partial submergence (PubMed:9037160). Induced in leaves by infection with the fungal pathogen Magnaporthe oryzae (PubMed:17012402). Induced by phosphate deficency (PubMed:30810167).</text>
</comment>
<comment type="miscellaneous">
    <text evidence="3">Lines with ACS2 transgene under the control of a strong pathogen-inducible promoter show significantly increased levels of endogenous ethylene and defense gene expression in response to pathogen infection, and exhibit increased resistance to Magnaporthe oryzae and Ralstonia solanacearum.</text>
</comment>
<comment type="similarity">
    <text evidence="7">Belongs to the class-I pyridoxal-phosphate-dependent aminotransferase family.</text>
</comment>
<evidence type="ECO:0000250" key="1">
    <source>
        <dbReference type="UniProtKB" id="P37821"/>
    </source>
</evidence>
<evidence type="ECO:0000269" key="2">
    <source>
    </source>
</evidence>
<evidence type="ECO:0000269" key="3">
    <source>
    </source>
</evidence>
<evidence type="ECO:0000269" key="4">
    <source>
    </source>
</evidence>
<evidence type="ECO:0000269" key="5">
    <source>
    </source>
</evidence>
<evidence type="ECO:0000303" key="6">
    <source>
    </source>
</evidence>
<evidence type="ECO:0000305" key="7"/>
<evidence type="ECO:0000305" key="8">
    <source>
    </source>
</evidence>
<evidence type="ECO:0000312" key="9">
    <source>
        <dbReference type="EMBL" id="BAS90624.1"/>
    </source>
</evidence>
<evidence type="ECO:0000312" key="10">
    <source>
        <dbReference type="EMBL" id="CAE03249.1"/>
    </source>
</evidence>
<feature type="chain" id="PRO_0000455669" description="1-aminocyclopropane-1-carboxylate synthase 2">
    <location>
        <begin position="1"/>
        <end position="483"/>
    </location>
</feature>
<feature type="modified residue" description="N6-(pyridoxal phosphate)lysine" evidence="1">
    <location>
        <position position="275"/>
    </location>
</feature>
<protein>
    <recommendedName>
        <fullName evidence="6">1-aminocyclopropane-1-carboxylate synthase 2</fullName>
        <shortName evidence="6">ACC synthase 2</shortName>
        <shortName evidence="6">OsACS2</shortName>
        <ecNumber evidence="1">4.4.1.14</ecNumber>
    </recommendedName>
</protein>